<feature type="chain" id="PRO_0000109530" description="Signal peptidase IB">
    <location>
        <begin position="1"/>
        <end position="191"/>
    </location>
</feature>
<feature type="topological domain" description="Cytoplasmic" evidence="2">
    <location>
        <begin position="1"/>
        <end position="7"/>
    </location>
</feature>
<feature type="transmembrane region" description="Helical" evidence="2">
    <location>
        <begin position="8"/>
        <end position="28"/>
    </location>
</feature>
<feature type="topological domain" description="Extracellular" evidence="2">
    <location>
        <begin position="29"/>
        <end position="191"/>
    </location>
</feature>
<feature type="active site" evidence="1">
    <location>
        <position position="36"/>
    </location>
</feature>
<feature type="active site" evidence="1">
    <location>
        <position position="77"/>
    </location>
</feature>
<gene>
    <name type="primary">spsB</name>
    <name type="ordered locus">SAS0835</name>
</gene>
<sequence length="191" mass="21692">MKKELLEWIISIAVAFVILFIVGKFIVTPYTIKGESMDPTLKDGERVAVNIIGYKTGGLEKGNVVVFHANKNDDYVKRVIGVPGDKVEYKNDTLYVNGKKQDEPYLNYNLKHKQGDYITGTFQVKDLPNANPKSNVIPKGKYLVLGDNREVSKDSRAFGLIDEDQIVGKVSFRFWPFSEFKHNFNPENTKN</sequence>
<name>LEP_STAAS</name>
<accession>Q6GAW1</accession>
<reference key="1">
    <citation type="journal article" date="2004" name="Proc. Natl. Acad. Sci. U.S.A.">
        <title>Complete genomes of two clinical Staphylococcus aureus strains: evidence for the rapid evolution of virulence and drug resistance.</title>
        <authorList>
            <person name="Holden M.T.G."/>
            <person name="Feil E.J."/>
            <person name="Lindsay J.A."/>
            <person name="Peacock S.J."/>
            <person name="Day N.P.J."/>
            <person name="Enright M.C."/>
            <person name="Foster T.J."/>
            <person name="Moore C.E."/>
            <person name="Hurst L."/>
            <person name="Atkin R."/>
            <person name="Barron A."/>
            <person name="Bason N."/>
            <person name="Bentley S.D."/>
            <person name="Chillingworth C."/>
            <person name="Chillingworth T."/>
            <person name="Churcher C."/>
            <person name="Clark L."/>
            <person name="Corton C."/>
            <person name="Cronin A."/>
            <person name="Doggett J."/>
            <person name="Dowd L."/>
            <person name="Feltwell T."/>
            <person name="Hance Z."/>
            <person name="Harris B."/>
            <person name="Hauser H."/>
            <person name="Holroyd S."/>
            <person name="Jagels K."/>
            <person name="James K.D."/>
            <person name="Lennard N."/>
            <person name="Line A."/>
            <person name="Mayes R."/>
            <person name="Moule S."/>
            <person name="Mungall K."/>
            <person name="Ormond D."/>
            <person name="Quail M.A."/>
            <person name="Rabbinowitsch E."/>
            <person name="Rutherford K.M."/>
            <person name="Sanders M."/>
            <person name="Sharp S."/>
            <person name="Simmonds M."/>
            <person name="Stevens K."/>
            <person name="Whitehead S."/>
            <person name="Barrell B.G."/>
            <person name="Spratt B.G."/>
            <person name="Parkhill J."/>
        </authorList>
    </citation>
    <scope>NUCLEOTIDE SEQUENCE [LARGE SCALE GENOMIC DNA]</scope>
    <source>
        <strain>MSSA476</strain>
    </source>
</reference>
<protein>
    <recommendedName>
        <fullName>Signal peptidase IB</fullName>
        <shortName>SPase IB</shortName>
        <ecNumber>3.4.21.89</ecNumber>
    </recommendedName>
    <alternativeName>
        <fullName>Leader peptidase IB</fullName>
    </alternativeName>
</protein>
<organism>
    <name type="scientific">Staphylococcus aureus (strain MSSA476)</name>
    <dbReference type="NCBI Taxonomy" id="282459"/>
    <lineage>
        <taxon>Bacteria</taxon>
        <taxon>Bacillati</taxon>
        <taxon>Bacillota</taxon>
        <taxon>Bacilli</taxon>
        <taxon>Bacillales</taxon>
        <taxon>Staphylococcaceae</taxon>
        <taxon>Staphylococcus</taxon>
    </lineage>
</organism>
<comment type="function">
    <text evidence="1">Essential for cell viability.</text>
</comment>
<comment type="catalytic activity">
    <reaction>
        <text>Cleavage of hydrophobic, N-terminal signal or leader sequences from secreted and periplasmic proteins.</text>
        <dbReference type="EC" id="3.4.21.89"/>
    </reaction>
</comment>
<comment type="subcellular location">
    <subcellularLocation>
        <location evidence="3">Cell membrane</location>
        <topology evidence="3">Single-pass type II membrane protein</topology>
    </subcellularLocation>
</comment>
<comment type="similarity">
    <text evidence="3">Belongs to the peptidase S26 family.</text>
</comment>
<dbReference type="EC" id="3.4.21.89"/>
<dbReference type="EMBL" id="BX571857">
    <property type="protein sequence ID" value="CAG42610.1"/>
    <property type="molecule type" value="Genomic_DNA"/>
</dbReference>
<dbReference type="SMR" id="Q6GAW1"/>
<dbReference type="MEROPS" id="S26.016"/>
<dbReference type="KEGG" id="sas:SAS0835"/>
<dbReference type="HOGENOM" id="CLU_028723_5_0_9"/>
<dbReference type="GO" id="GO:0005886">
    <property type="term" value="C:plasma membrane"/>
    <property type="evidence" value="ECO:0007669"/>
    <property type="project" value="UniProtKB-SubCell"/>
</dbReference>
<dbReference type="GO" id="GO:0004252">
    <property type="term" value="F:serine-type endopeptidase activity"/>
    <property type="evidence" value="ECO:0007669"/>
    <property type="project" value="UniProtKB-EC"/>
</dbReference>
<dbReference type="GO" id="GO:0006465">
    <property type="term" value="P:signal peptide processing"/>
    <property type="evidence" value="ECO:0007669"/>
    <property type="project" value="InterPro"/>
</dbReference>
<dbReference type="CDD" id="cd06530">
    <property type="entry name" value="S26_SPase_I"/>
    <property type="match status" value="1"/>
</dbReference>
<dbReference type="FunFam" id="2.10.109.10:FF:000008">
    <property type="entry name" value="Signal peptidase I"/>
    <property type="match status" value="1"/>
</dbReference>
<dbReference type="Gene3D" id="2.10.109.10">
    <property type="entry name" value="Umud Fragment, subunit A"/>
    <property type="match status" value="1"/>
</dbReference>
<dbReference type="InterPro" id="IPR036286">
    <property type="entry name" value="LexA/Signal_pep-like_sf"/>
</dbReference>
<dbReference type="InterPro" id="IPR000223">
    <property type="entry name" value="Pept_S26A_signal_pept_1"/>
</dbReference>
<dbReference type="InterPro" id="IPR019758">
    <property type="entry name" value="Pept_S26A_signal_pept_1_CS"/>
</dbReference>
<dbReference type="InterPro" id="IPR019757">
    <property type="entry name" value="Pept_S26A_signal_pept_1_Lys-AS"/>
</dbReference>
<dbReference type="InterPro" id="IPR019756">
    <property type="entry name" value="Pept_S26A_signal_pept_1_Ser-AS"/>
</dbReference>
<dbReference type="InterPro" id="IPR019533">
    <property type="entry name" value="Peptidase_S26"/>
</dbReference>
<dbReference type="NCBIfam" id="TIGR02227">
    <property type="entry name" value="sigpep_I_bact"/>
    <property type="match status" value="1"/>
</dbReference>
<dbReference type="PANTHER" id="PTHR43390:SF1">
    <property type="entry name" value="CHLOROPLAST PROCESSING PEPTIDASE"/>
    <property type="match status" value="1"/>
</dbReference>
<dbReference type="PANTHER" id="PTHR43390">
    <property type="entry name" value="SIGNAL PEPTIDASE I"/>
    <property type="match status" value="1"/>
</dbReference>
<dbReference type="Pfam" id="PF10502">
    <property type="entry name" value="Peptidase_S26"/>
    <property type="match status" value="1"/>
</dbReference>
<dbReference type="PRINTS" id="PR00727">
    <property type="entry name" value="LEADERPTASE"/>
</dbReference>
<dbReference type="SUPFAM" id="SSF51306">
    <property type="entry name" value="LexA/Signal peptidase"/>
    <property type="match status" value="1"/>
</dbReference>
<dbReference type="PROSITE" id="PS00501">
    <property type="entry name" value="SPASE_I_1"/>
    <property type="match status" value="1"/>
</dbReference>
<dbReference type="PROSITE" id="PS00760">
    <property type="entry name" value="SPASE_I_2"/>
    <property type="match status" value="1"/>
</dbReference>
<dbReference type="PROSITE" id="PS00761">
    <property type="entry name" value="SPASE_I_3"/>
    <property type="match status" value="1"/>
</dbReference>
<proteinExistence type="inferred from homology"/>
<evidence type="ECO:0000250" key="1"/>
<evidence type="ECO:0000255" key="2"/>
<evidence type="ECO:0000305" key="3"/>
<keyword id="KW-1003">Cell membrane</keyword>
<keyword id="KW-0378">Hydrolase</keyword>
<keyword id="KW-0472">Membrane</keyword>
<keyword id="KW-0645">Protease</keyword>
<keyword id="KW-0812">Transmembrane</keyword>
<keyword id="KW-1133">Transmembrane helix</keyword>